<proteinExistence type="inferred from homology"/>
<gene>
    <name evidence="1" type="primary">hisC</name>
    <name type="ordered locus">SF2083</name>
    <name type="ordered locus">S2204</name>
</gene>
<keyword id="KW-0028">Amino-acid biosynthesis</keyword>
<keyword id="KW-0032">Aminotransferase</keyword>
<keyword id="KW-0368">Histidine biosynthesis</keyword>
<keyword id="KW-0663">Pyridoxal phosphate</keyword>
<keyword id="KW-1185">Reference proteome</keyword>
<keyword id="KW-0808">Transferase</keyword>
<accession>Q83KJ6</accession>
<organism>
    <name type="scientific">Shigella flexneri</name>
    <dbReference type="NCBI Taxonomy" id="623"/>
    <lineage>
        <taxon>Bacteria</taxon>
        <taxon>Pseudomonadati</taxon>
        <taxon>Pseudomonadota</taxon>
        <taxon>Gammaproteobacteria</taxon>
        <taxon>Enterobacterales</taxon>
        <taxon>Enterobacteriaceae</taxon>
        <taxon>Shigella</taxon>
    </lineage>
</organism>
<protein>
    <recommendedName>
        <fullName evidence="1">Histidinol-phosphate aminotransferase</fullName>
        <ecNumber evidence="1">2.6.1.9</ecNumber>
    </recommendedName>
    <alternativeName>
        <fullName evidence="1">Imidazole acetol-phosphate transaminase</fullName>
    </alternativeName>
</protein>
<dbReference type="EC" id="2.6.1.9" evidence="1"/>
<dbReference type="EMBL" id="AE005674">
    <property type="protein sequence ID" value="AAN43623.1"/>
    <property type="molecule type" value="Genomic_DNA"/>
</dbReference>
<dbReference type="EMBL" id="AE014073">
    <property type="protein sequence ID" value="AAP17451.1"/>
    <property type="molecule type" value="Genomic_DNA"/>
</dbReference>
<dbReference type="RefSeq" id="NP_707916.1">
    <property type="nucleotide sequence ID" value="NC_004337.2"/>
</dbReference>
<dbReference type="RefSeq" id="WP_000108918.1">
    <property type="nucleotide sequence ID" value="NZ_WPGW01000112.1"/>
</dbReference>
<dbReference type="SMR" id="Q83KJ6"/>
<dbReference type="STRING" id="198214.SF2083"/>
<dbReference type="PaxDb" id="198214-SF2083"/>
<dbReference type="GeneID" id="1026780"/>
<dbReference type="KEGG" id="sfl:SF2083"/>
<dbReference type="KEGG" id="sfx:S2204"/>
<dbReference type="PATRIC" id="fig|198214.7.peg.2492"/>
<dbReference type="HOGENOM" id="CLU_017584_3_1_6"/>
<dbReference type="UniPathway" id="UPA00031">
    <property type="reaction ID" value="UER00012"/>
</dbReference>
<dbReference type="Proteomes" id="UP000001006">
    <property type="component" value="Chromosome"/>
</dbReference>
<dbReference type="Proteomes" id="UP000002673">
    <property type="component" value="Chromosome"/>
</dbReference>
<dbReference type="GO" id="GO:0004400">
    <property type="term" value="F:histidinol-phosphate transaminase activity"/>
    <property type="evidence" value="ECO:0007669"/>
    <property type="project" value="UniProtKB-UniRule"/>
</dbReference>
<dbReference type="GO" id="GO:0030170">
    <property type="term" value="F:pyridoxal phosphate binding"/>
    <property type="evidence" value="ECO:0007669"/>
    <property type="project" value="InterPro"/>
</dbReference>
<dbReference type="GO" id="GO:0000105">
    <property type="term" value="P:L-histidine biosynthetic process"/>
    <property type="evidence" value="ECO:0007669"/>
    <property type="project" value="UniProtKB-UniRule"/>
</dbReference>
<dbReference type="CDD" id="cd00609">
    <property type="entry name" value="AAT_like"/>
    <property type="match status" value="1"/>
</dbReference>
<dbReference type="FunFam" id="3.40.640.10:FF:000032">
    <property type="entry name" value="Histidinol-phosphate aminotransferase"/>
    <property type="match status" value="1"/>
</dbReference>
<dbReference type="FunFam" id="3.90.1150.10:FF:000042">
    <property type="entry name" value="Histidinol-phosphate aminotransferase"/>
    <property type="match status" value="1"/>
</dbReference>
<dbReference type="Gene3D" id="3.90.1150.10">
    <property type="entry name" value="Aspartate Aminotransferase, domain 1"/>
    <property type="match status" value="1"/>
</dbReference>
<dbReference type="Gene3D" id="3.40.640.10">
    <property type="entry name" value="Type I PLP-dependent aspartate aminotransferase-like (Major domain)"/>
    <property type="match status" value="1"/>
</dbReference>
<dbReference type="HAMAP" id="MF_01023">
    <property type="entry name" value="HisC_aminotrans_2"/>
    <property type="match status" value="1"/>
</dbReference>
<dbReference type="InterPro" id="IPR001917">
    <property type="entry name" value="Aminotrans_II_pyridoxalP_BS"/>
</dbReference>
<dbReference type="InterPro" id="IPR004839">
    <property type="entry name" value="Aminotransferase_I/II_large"/>
</dbReference>
<dbReference type="InterPro" id="IPR005861">
    <property type="entry name" value="HisP_aminotrans"/>
</dbReference>
<dbReference type="InterPro" id="IPR015424">
    <property type="entry name" value="PyrdxlP-dep_Trfase"/>
</dbReference>
<dbReference type="InterPro" id="IPR015421">
    <property type="entry name" value="PyrdxlP-dep_Trfase_major"/>
</dbReference>
<dbReference type="InterPro" id="IPR015422">
    <property type="entry name" value="PyrdxlP-dep_Trfase_small"/>
</dbReference>
<dbReference type="NCBIfam" id="TIGR01141">
    <property type="entry name" value="hisC"/>
    <property type="match status" value="1"/>
</dbReference>
<dbReference type="PANTHER" id="PTHR42885:SF2">
    <property type="entry name" value="HISTIDINOL-PHOSPHATE AMINOTRANSFERASE"/>
    <property type="match status" value="1"/>
</dbReference>
<dbReference type="PANTHER" id="PTHR42885">
    <property type="entry name" value="HISTIDINOL-PHOSPHATE AMINOTRANSFERASE-RELATED"/>
    <property type="match status" value="1"/>
</dbReference>
<dbReference type="Pfam" id="PF00155">
    <property type="entry name" value="Aminotran_1_2"/>
    <property type="match status" value="1"/>
</dbReference>
<dbReference type="SUPFAM" id="SSF53383">
    <property type="entry name" value="PLP-dependent transferases"/>
    <property type="match status" value="1"/>
</dbReference>
<dbReference type="PROSITE" id="PS00599">
    <property type="entry name" value="AA_TRANSFER_CLASS_2"/>
    <property type="match status" value="1"/>
</dbReference>
<reference key="1">
    <citation type="journal article" date="2002" name="Nucleic Acids Res.">
        <title>Genome sequence of Shigella flexneri 2a: insights into pathogenicity through comparison with genomes of Escherichia coli K12 and O157.</title>
        <authorList>
            <person name="Jin Q."/>
            <person name="Yuan Z."/>
            <person name="Xu J."/>
            <person name="Wang Y."/>
            <person name="Shen Y."/>
            <person name="Lu W."/>
            <person name="Wang J."/>
            <person name="Liu H."/>
            <person name="Yang J."/>
            <person name="Yang F."/>
            <person name="Zhang X."/>
            <person name="Zhang J."/>
            <person name="Yang G."/>
            <person name="Wu H."/>
            <person name="Qu D."/>
            <person name="Dong J."/>
            <person name="Sun L."/>
            <person name="Xue Y."/>
            <person name="Zhao A."/>
            <person name="Gao Y."/>
            <person name="Zhu J."/>
            <person name="Kan B."/>
            <person name="Ding K."/>
            <person name="Chen S."/>
            <person name="Cheng H."/>
            <person name="Yao Z."/>
            <person name="He B."/>
            <person name="Chen R."/>
            <person name="Ma D."/>
            <person name="Qiang B."/>
            <person name="Wen Y."/>
            <person name="Hou Y."/>
            <person name="Yu J."/>
        </authorList>
    </citation>
    <scope>NUCLEOTIDE SEQUENCE [LARGE SCALE GENOMIC DNA]</scope>
    <source>
        <strain>301 / Serotype 2a</strain>
    </source>
</reference>
<reference key="2">
    <citation type="journal article" date="2003" name="Infect. Immun.">
        <title>Complete genome sequence and comparative genomics of Shigella flexneri serotype 2a strain 2457T.</title>
        <authorList>
            <person name="Wei J."/>
            <person name="Goldberg M.B."/>
            <person name="Burland V."/>
            <person name="Venkatesan M.M."/>
            <person name="Deng W."/>
            <person name="Fournier G."/>
            <person name="Mayhew G.F."/>
            <person name="Plunkett G. III"/>
            <person name="Rose D.J."/>
            <person name="Darling A."/>
            <person name="Mau B."/>
            <person name="Perna N.T."/>
            <person name="Payne S.M."/>
            <person name="Runyen-Janecky L.J."/>
            <person name="Zhou S."/>
            <person name="Schwartz D.C."/>
            <person name="Blattner F.R."/>
        </authorList>
    </citation>
    <scope>NUCLEOTIDE SEQUENCE [LARGE SCALE GENOMIC DNA]</scope>
    <source>
        <strain>ATCC 700930 / 2457T / Serotype 2a</strain>
    </source>
</reference>
<feature type="chain" id="PRO_0000153448" description="Histidinol-phosphate aminotransferase">
    <location>
        <begin position="1"/>
        <end position="356"/>
    </location>
</feature>
<feature type="modified residue" description="N6-(pyridoxal phosphate)lysine" evidence="1">
    <location>
        <position position="214"/>
    </location>
</feature>
<name>HIS8_SHIFL</name>
<sequence length="356" mass="39361">MSTVTITDLARENVRNLTPYQSARRLGGNGDVWLNANEYPTAVEFKLTQQTLNRYPECQPKAVIENYAQYAGVKPEQVLVSRGADEGIELLIRAFCEPGKDAILYCPPTYGMYSVSAETIGVECRTVPTLENWQLDLQGISDKLDGVKVVYVCSPNNPTGQLINPQDFRTLLELTRGKAIVVADEAYIEFCPQASLAGWLAEYPHLAILRTLSKAFALAGLRCGFTLANEEVINLLMKVIPPYPLSTPVADIAAQALSPQGIVAMSERVAQIITEREYLIAALKEIPCVEQVFDSETNYILARFKASSAVFKSLWDQGIILRDQNKQPSLSGCLRITVGTREESQRVIDALRAEQV</sequence>
<comment type="catalytic activity">
    <reaction evidence="1">
        <text>L-histidinol phosphate + 2-oxoglutarate = 3-(imidazol-4-yl)-2-oxopropyl phosphate + L-glutamate</text>
        <dbReference type="Rhea" id="RHEA:23744"/>
        <dbReference type="ChEBI" id="CHEBI:16810"/>
        <dbReference type="ChEBI" id="CHEBI:29985"/>
        <dbReference type="ChEBI" id="CHEBI:57766"/>
        <dbReference type="ChEBI" id="CHEBI:57980"/>
        <dbReference type="EC" id="2.6.1.9"/>
    </reaction>
</comment>
<comment type="cofactor">
    <cofactor evidence="1">
        <name>pyridoxal 5'-phosphate</name>
        <dbReference type="ChEBI" id="CHEBI:597326"/>
    </cofactor>
</comment>
<comment type="pathway">
    <text evidence="1">Amino-acid biosynthesis; L-histidine biosynthesis; L-histidine from 5-phospho-alpha-D-ribose 1-diphosphate: step 7/9.</text>
</comment>
<comment type="subunit">
    <text evidence="1">Homodimer.</text>
</comment>
<comment type="similarity">
    <text evidence="1">Belongs to the class-II pyridoxal-phosphate-dependent aminotransferase family. Histidinol-phosphate aminotransferase subfamily.</text>
</comment>
<evidence type="ECO:0000255" key="1">
    <source>
        <dbReference type="HAMAP-Rule" id="MF_01023"/>
    </source>
</evidence>